<dbReference type="EC" id="2.4.99.17" evidence="1"/>
<dbReference type="EMBL" id="CP000139">
    <property type="protein sequence ID" value="ABR38864.1"/>
    <property type="molecule type" value="Genomic_DNA"/>
</dbReference>
<dbReference type="RefSeq" id="WP_005844013.1">
    <property type="nucleotide sequence ID" value="NZ_JANSWM010000115.1"/>
</dbReference>
<dbReference type="SMR" id="A6KZK0"/>
<dbReference type="STRING" id="435590.BVU_1173"/>
<dbReference type="PaxDb" id="435590-BVU_1173"/>
<dbReference type="GeneID" id="5302139"/>
<dbReference type="KEGG" id="bvu:BVU_1173"/>
<dbReference type="eggNOG" id="COG0809">
    <property type="taxonomic scope" value="Bacteria"/>
</dbReference>
<dbReference type="HOGENOM" id="CLU_039110_1_0_10"/>
<dbReference type="BioCyc" id="BVUL435590:G1G59-1220-MONOMER"/>
<dbReference type="UniPathway" id="UPA00392"/>
<dbReference type="Proteomes" id="UP000002861">
    <property type="component" value="Chromosome"/>
</dbReference>
<dbReference type="GO" id="GO:0005737">
    <property type="term" value="C:cytoplasm"/>
    <property type="evidence" value="ECO:0007669"/>
    <property type="project" value="UniProtKB-SubCell"/>
</dbReference>
<dbReference type="GO" id="GO:0051075">
    <property type="term" value="F:S-adenosylmethionine:tRNA ribosyltransferase-isomerase activity"/>
    <property type="evidence" value="ECO:0007669"/>
    <property type="project" value="UniProtKB-EC"/>
</dbReference>
<dbReference type="GO" id="GO:0008616">
    <property type="term" value="P:queuosine biosynthetic process"/>
    <property type="evidence" value="ECO:0007669"/>
    <property type="project" value="UniProtKB-UniRule"/>
</dbReference>
<dbReference type="GO" id="GO:0002099">
    <property type="term" value="P:tRNA wobble guanine modification"/>
    <property type="evidence" value="ECO:0007669"/>
    <property type="project" value="TreeGrafter"/>
</dbReference>
<dbReference type="FunFam" id="2.40.10.240:FF:000002">
    <property type="entry name" value="S-adenosylmethionine:tRNA ribosyltransferase-isomerase"/>
    <property type="match status" value="1"/>
</dbReference>
<dbReference type="FunFam" id="3.40.1780.10:FF:000001">
    <property type="entry name" value="S-adenosylmethionine:tRNA ribosyltransferase-isomerase"/>
    <property type="match status" value="1"/>
</dbReference>
<dbReference type="Gene3D" id="2.40.10.240">
    <property type="entry name" value="QueA-like"/>
    <property type="match status" value="1"/>
</dbReference>
<dbReference type="Gene3D" id="3.40.1780.10">
    <property type="entry name" value="QueA-like"/>
    <property type="match status" value="1"/>
</dbReference>
<dbReference type="HAMAP" id="MF_00113">
    <property type="entry name" value="QueA"/>
    <property type="match status" value="1"/>
</dbReference>
<dbReference type="InterPro" id="IPR003699">
    <property type="entry name" value="QueA"/>
</dbReference>
<dbReference type="InterPro" id="IPR042118">
    <property type="entry name" value="QueA_dom1"/>
</dbReference>
<dbReference type="InterPro" id="IPR042119">
    <property type="entry name" value="QueA_dom2"/>
</dbReference>
<dbReference type="InterPro" id="IPR036100">
    <property type="entry name" value="QueA_sf"/>
</dbReference>
<dbReference type="NCBIfam" id="NF001140">
    <property type="entry name" value="PRK00147.1"/>
    <property type="match status" value="1"/>
</dbReference>
<dbReference type="NCBIfam" id="TIGR00113">
    <property type="entry name" value="queA"/>
    <property type="match status" value="1"/>
</dbReference>
<dbReference type="PANTHER" id="PTHR30307">
    <property type="entry name" value="S-ADENOSYLMETHIONINE:TRNA RIBOSYLTRANSFERASE-ISOMERASE"/>
    <property type="match status" value="1"/>
</dbReference>
<dbReference type="PANTHER" id="PTHR30307:SF0">
    <property type="entry name" value="S-ADENOSYLMETHIONINE:TRNA RIBOSYLTRANSFERASE-ISOMERASE"/>
    <property type="match status" value="1"/>
</dbReference>
<dbReference type="Pfam" id="PF02547">
    <property type="entry name" value="Queuosine_synth"/>
    <property type="match status" value="1"/>
</dbReference>
<dbReference type="SUPFAM" id="SSF111337">
    <property type="entry name" value="QueA-like"/>
    <property type="match status" value="1"/>
</dbReference>
<feature type="chain" id="PRO_1000015179" description="S-adenosylmethionine:tRNA ribosyltransferase-isomerase">
    <location>
        <begin position="1"/>
        <end position="351"/>
    </location>
</feature>
<evidence type="ECO:0000255" key="1">
    <source>
        <dbReference type="HAMAP-Rule" id="MF_00113"/>
    </source>
</evidence>
<comment type="function">
    <text evidence="1">Transfers and isomerizes the ribose moiety from AdoMet to the 7-aminomethyl group of 7-deazaguanine (preQ1-tRNA) to give epoxyqueuosine (oQ-tRNA).</text>
</comment>
<comment type="catalytic activity">
    <reaction evidence="1">
        <text>7-aminomethyl-7-carbaguanosine(34) in tRNA + S-adenosyl-L-methionine = epoxyqueuosine(34) in tRNA + adenine + L-methionine + 2 H(+)</text>
        <dbReference type="Rhea" id="RHEA:32155"/>
        <dbReference type="Rhea" id="RHEA-COMP:10342"/>
        <dbReference type="Rhea" id="RHEA-COMP:18582"/>
        <dbReference type="ChEBI" id="CHEBI:15378"/>
        <dbReference type="ChEBI" id="CHEBI:16708"/>
        <dbReference type="ChEBI" id="CHEBI:57844"/>
        <dbReference type="ChEBI" id="CHEBI:59789"/>
        <dbReference type="ChEBI" id="CHEBI:82833"/>
        <dbReference type="ChEBI" id="CHEBI:194443"/>
        <dbReference type="EC" id="2.4.99.17"/>
    </reaction>
</comment>
<comment type="pathway">
    <text evidence="1">tRNA modification; tRNA-queuosine biosynthesis.</text>
</comment>
<comment type="subunit">
    <text evidence="1">Monomer.</text>
</comment>
<comment type="subcellular location">
    <subcellularLocation>
        <location evidence="1">Cytoplasm</location>
    </subcellularLocation>
</comment>
<comment type="similarity">
    <text evidence="1">Belongs to the QueA family.</text>
</comment>
<sequence>MKLSQFKFKLPEDKIALHPAKYRDESRLMVVHKSTGKIEHKVFKDILDYFDDKDVFIFNDTKVFPARLYGNKEKTGARIEVFLLRELNEELRLWDVLVDPARKIRIGNKLYFGDDDSMVAEVIDNTTSRGRTLRFLYDGSHDEFKKALYALGEAPLPSFIRRPVEEEDAERFQTIFAKNEGAVTAPTAGLHFSRELMKRMEIKGIDFAFVTMHAGLGNFREIDVEDLTKHKMDSEQMYVNADACRIVNNAKDEGKNICAVGTTVMRTIETAVGTDGHLKEFDGWTNKFIFPPYDFSVANSMVTNFHLPLSTLLMLVAAYGGYDLVMEAYHTALKEDYRFGTYGDAMLILDK</sequence>
<gene>
    <name evidence="1" type="primary">queA</name>
    <name type="ordered locus">BVU_1173</name>
</gene>
<organism>
    <name type="scientific">Phocaeicola vulgatus (strain ATCC 8482 / DSM 1447 / JCM 5826 / CCUG 4940 / NBRC 14291 / NCTC 11154)</name>
    <name type="common">Bacteroides vulgatus</name>
    <dbReference type="NCBI Taxonomy" id="435590"/>
    <lineage>
        <taxon>Bacteria</taxon>
        <taxon>Pseudomonadati</taxon>
        <taxon>Bacteroidota</taxon>
        <taxon>Bacteroidia</taxon>
        <taxon>Bacteroidales</taxon>
        <taxon>Bacteroidaceae</taxon>
        <taxon>Phocaeicola</taxon>
    </lineage>
</organism>
<accession>A6KZK0</accession>
<keyword id="KW-0963">Cytoplasm</keyword>
<keyword id="KW-0671">Queuosine biosynthesis</keyword>
<keyword id="KW-0949">S-adenosyl-L-methionine</keyword>
<keyword id="KW-0808">Transferase</keyword>
<proteinExistence type="inferred from homology"/>
<name>QUEA_PHOV8</name>
<protein>
    <recommendedName>
        <fullName evidence="1">S-adenosylmethionine:tRNA ribosyltransferase-isomerase</fullName>
        <ecNumber evidence="1">2.4.99.17</ecNumber>
    </recommendedName>
    <alternativeName>
        <fullName evidence="1">Queuosine biosynthesis protein QueA</fullName>
    </alternativeName>
</protein>
<reference key="1">
    <citation type="journal article" date="2007" name="PLoS Biol.">
        <title>Evolution of symbiotic bacteria in the distal human intestine.</title>
        <authorList>
            <person name="Xu J."/>
            <person name="Mahowald M.A."/>
            <person name="Ley R.E."/>
            <person name="Lozupone C.A."/>
            <person name="Hamady M."/>
            <person name="Martens E.C."/>
            <person name="Henrissat B."/>
            <person name="Coutinho P.M."/>
            <person name="Minx P."/>
            <person name="Latreille P."/>
            <person name="Cordum H."/>
            <person name="Van Brunt A."/>
            <person name="Kim K."/>
            <person name="Fulton R.S."/>
            <person name="Fulton L.A."/>
            <person name="Clifton S.W."/>
            <person name="Wilson R.K."/>
            <person name="Knight R.D."/>
            <person name="Gordon J.I."/>
        </authorList>
    </citation>
    <scope>NUCLEOTIDE SEQUENCE [LARGE SCALE GENOMIC DNA]</scope>
    <source>
        <strain>ATCC 8482 / DSM 1447 / JCM 5826 / CCUG 4940 / NBRC 14291 / NCTC 11154</strain>
    </source>
</reference>